<proteinExistence type="evidence at protein level"/>
<keyword id="KW-0328">Glycosyltransferase</keyword>
<keyword id="KW-0808">Transferase</keyword>
<protein>
    <recommendedName>
        <fullName>Alpha,alpha-trehalose-phosphate synthase [UDP-forming]</fullName>
        <ecNumber evidence="5">2.4.1.15</ecNumber>
    </recommendedName>
    <alternativeName>
        <fullName>Trehalose-6-phosphate synthase</fullName>
    </alternativeName>
    <alternativeName>
        <fullName>UDP-glucose-glucosephosphate glucosyltransferase</fullName>
    </alternativeName>
</protein>
<feature type="chain" id="PRO_0000122503" description="Alpha,alpha-trehalose-phosphate synthase [UDP-forming]">
    <location>
        <begin position="1"/>
        <end position="485"/>
    </location>
</feature>
<feature type="binding site" evidence="1">
    <location>
        <position position="99"/>
    </location>
    <ligand>
        <name>D-glucose 6-phosphate</name>
        <dbReference type="ChEBI" id="CHEBI:61548"/>
    </ligand>
</feature>
<feature type="binding site" evidence="1">
    <location>
        <position position="153"/>
    </location>
    <ligand>
        <name>D-glucose 6-phosphate</name>
        <dbReference type="ChEBI" id="CHEBI:61548"/>
    </ligand>
</feature>
<feature type="binding site" evidence="1">
    <location>
        <position position="290"/>
    </location>
    <ligand>
        <name>UDP</name>
        <dbReference type="ChEBI" id="CHEBI:58223"/>
    </ligand>
</feature>
<feature type="binding site" evidence="1">
    <location>
        <position position="290"/>
    </location>
    <ligand>
        <name>UDP-alpha-D-glucose</name>
        <dbReference type="ChEBI" id="CHEBI:58885"/>
    </ligand>
</feature>
<feature type="binding site" evidence="1">
    <location>
        <position position="295"/>
    </location>
    <ligand>
        <name>UDP</name>
        <dbReference type="ChEBI" id="CHEBI:58223"/>
    </ligand>
</feature>
<feature type="binding site" evidence="1">
    <location>
        <position position="295"/>
    </location>
    <ligand>
        <name>UDP-alpha-D-glucose</name>
        <dbReference type="ChEBI" id="CHEBI:58885"/>
    </ligand>
</feature>
<feature type="binding site" evidence="1">
    <location>
        <position position="328"/>
    </location>
    <ligand>
        <name>D-glucose 6-phosphate</name>
        <dbReference type="ChEBI" id="CHEBI:61548"/>
    </ligand>
</feature>
<feature type="binding site" evidence="1">
    <location>
        <position position="367"/>
    </location>
    <ligand>
        <name>UDP</name>
        <dbReference type="ChEBI" id="CHEBI:58223"/>
    </ligand>
</feature>
<feature type="binding site" evidence="1">
    <location>
        <position position="367"/>
    </location>
    <ligand>
        <name>UDP-alpha-D-glucose</name>
        <dbReference type="ChEBI" id="CHEBI:58885"/>
    </ligand>
</feature>
<feature type="binding site" evidence="1">
    <location>
        <begin position="389"/>
        <end position="397"/>
    </location>
    <ligand>
        <name>UDP-alpha-D-glucose</name>
        <dbReference type="ChEBI" id="CHEBI:58885"/>
    </ligand>
</feature>
<feature type="binding site" evidence="1">
    <location>
        <begin position="393"/>
        <end position="397"/>
    </location>
    <ligand>
        <name>UDP</name>
        <dbReference type="ChEBI" id="CHEBI:58223"/>
    </ligand>
</feature>
<organism>
    <name type="scientific">Zygosaccharomyces rouxii</name>
    <dbReference type="NCBI Taxonomy" id="4956"/>
    <lineage>
        <taxon>Eukaryota</taxon>
        <taxon>Fungi</taxon>
        <taxon>Dikarya</taxon>
        <taxon>Ascomycota</taxon>
        <taxon>Saccharomycotina</taxon>
        <taxon>Saccharomycetes</taxon>
        <taxon>Saccharomycetales</taxon>
        <taxon>Saccharomycetaceae</taxon>
        <taxon>Zygosaccharomyces</taxon>
    </lineage>
</organism>
<evidence type="ECO:0000250" key="1">
    <source>
        <dbReference type="UniProtKB" id="Q92410"/>
    </source>
</evidence>
<evidence type="ECO:0000269" key="2">
    <source>
    </source>
</evidence>
<evidence type="ECO:0000303" key="3">
    <source>
    </source>
</evidence>
<evidence type="ECO:0000305" key="4"/>
<evidence type="ECO:0000305" key="5">
    <source>
    </source>
</evidence>
<gene>
    <name evidence="3" type="primary">TPS1</name>
    <name evidence="3" type="synonym">ZrTPS1</name>
</gene>
<accession>Q96WK6</accession>
<comment type="function">
    <text evidence="2">Synthase catalytic subunit of the trehalose synthase complex that catalyzes the production of trehalose from glucose-6-phosphate and UDP-alpha-D-glucose in a two step process.</text>
</comment>
<comment type="catalytic activity">
    <reaction evidence="5">
        <text>D-glucose 6-phosphate + UDP-alpha-D-glucose = alpha,alpha-trehalose 6-phosphate + UDP + H(+)</text>
        <dbReference type="Rhea" id="RHEA:18889"/>
        <dbReference type="ChEBI" id="CHEBI:15378"/>
        <dbReference type="ChEBI" id="CHEBI:58223"/>
        <dbReference type="ChEBI" id="CHEBI:58429"/>
        <dbReference type="ChEBI" id="CHEBI:58885"/>
        <dbReference type="ChEBI" id="CHEBI:61548"/>
        <dbReference type="EC" id="2.4.1.15"/>
    </reaction>
</comment>
<comment type="pathway">
    <text evidence="4">Carbohydrate biosynthesis.</text>
</comment>
<comment type="induction">
    <text evidence="2">Repressed by salt stress.</text>
</comment>
<comment type="similarity">
    <text evidence="4">Belongs to the glycosyltransferase 20 family.</text>
</comment>
<reference evidence="4" key="1">
    <citation type="journal article" date="2003" name="FEMS Yeast Res.">
        <title>Cloning and characterization of genes encoding trehalose-6-phosphate synthase (TPS1) and trehalose-6-phosphate phosphatase (TPS2) from Zygosaccharomyces rouxii.</title>
        <authorList>
            <person name="Kwon H.B."/>
            <person name="Yeo E.T."/>
            <person name="Hahn S.E."/>
            <person name="Bae S.C."/>
            <person name="Kim D.Y."/>
            <person name="Byun M.O."/>
        </authorList>
    </citation>
    <scope>NUCLEOTIDE SEQUENCE [MRNA]</scope>
    <scope>FUNCTION</scope>
    <scope>CATALYTIC ACTIVITY</scope>
    <scope>INDUCTION</scope>
    <source>
        <strain>KACC 30010</strain>
    </source>
</reference>
<dbReference type="EC" id="2.4.1.15" evidence="5"/>
<dbReference type="EMBL" id="AF276078">
    <property type="protein sequence ID" value="AAK69413.1"/>
    <property type="molecule type" value="mRNA"/>
</dbReference>
<dbReference type="SMR" id="Q96WK6"/>
<dbReference type="CAZy" id="GT20">
    <property type="family name" value="Glycosyltransferase Family 20"/>
</dbReference>
<dbReference type="eggNOG" id="KOG1050">
    <property type="taxonomic scope" value="Eukaryota"/>
</dbReference>
<dbReference type="GO" id="GO:0005946">
    <property type="term" value="C:alpha,alpha-trehalose-phosphate synthase complex (UDP-forming)"/>
    <property type="evidence" value="ECO:0007669"/>
    <property type="project" value="TreeGrafter"/>
</dbReference>
<dbReference type="GO" id="GO:0005829">
    <property type="term" value="C:cytosol"/>
    <property type="evidence" value="ECO:0007669"/>
    <property type="project" value="TreeGrafter"/>
</dbReference>
<dbReference type="GO" id="GO:0003825">
    <property type="term" value="F:alpha,alpha-trehalose-phosphate synthase (UDP-forming) activity"/>
    <property type="evidence" value="ECO:0007669"/>
    <property type="project" value="UniProtKB-EC"/>
</dbReference>
<dbReference type="GO" id="GO:0102986">
    <property type="term" value="F:trehalose synthase activity"/>
    <property type="evidence" value="ECO:0000316"/>
    <property type="project" value="UniProtKB"/>
</dbReference>
<dbReference type="GO" id="GO:0004805">
    <property type="term" value="F:trehalose-phosphatase activity"/>
    <property type="evidence" value="ECO:0007669"/>
    <property type="project" value="TreeGrafter"/>
</dbReference>
<dbReference type="GO" id="GO:0034605">
    <property type="term" value="P:cellular response to heat"/>
    <property type="evidence" value="ECO:0007669"/>
    <property type="project" value="TreeGrafter"/>
</dbReference>
<dbReference type="GO" id="GO:0005992">
    <property type="term" value="P:trehalose biosynthetic process"/>
    <property type="evidence" value="ECO:0000316"/>
    <property type="project" value="UniProtKB"/>
</dbReference>
<dbReference type="CDD" id="cd03788">
    <property type="entry name" value="GT20_TPS"/>
    <property type="match status" value="1"/>
</dbReference>
<dbReference type="FunFam" id="3.40.50.2000:FF:000007">
    <property type="entry name" value="Trehalose-6-phosphate synthase"/>
    <property type="match status" value="1"/>
</dbReference>
<dbReference type="FunFam" id="3.40.50.2000:FF:000035">
    <property type="entry name" value="Trehalose-6-phosphate synthase"/>
    <property type="match status" value="1"/>
</dbReference>
<dbReference type="Gene3D" id="3.40.50.2000">
    <property type="entry name" value="Glycogen Phosphorylase B"/>
    <property type="match status" value="2"/>
</dbReference>
<dbReference type="InterPro" id="IPR001830">
    <property type="entry name" value="Glyco_trans_20"/>
</dbReference>
<dbReference type="InterPro" id="IPR012766">
    <property type="entry name" value="Trehalose_OtsA"/>
</dbReference>
<dbReference type="NCBIfam" id="TIGR02400">
    <property type="entry name" value="trehalose_OtsA"/>
    <property type="match status" value="1"/>
</dbReference>
<dbReference type="PANTHER" id="PTHR10788:SF106">
    <property type="entry name" value="BCDNA.GH08860"/>
    <property type="match status" value="1"/>
</dbReference>
<dbReference type="PANTHER" id="PTHR10788">
    <property type="entry name" value="TREHALOSE-6-PHOSPHATE SYNTHASE"/>
    <property type="match status" value="1"/>
</dbReference>
<dbReference type="Pfam" id="PF00982">
    <property type="entry name" value="Glyco_transf_20"/>
    <property type="match status" value="1"/>
</dbReference>
<dbReference type="SUPFAM" id="SSF53756">
    <property type="entry name" value="UDP-Glycosyltransferase/glycogen phosphorylase"/>
    <property type="match status" value="1"/>
</dbReference>
<sequence>MTVSKKDSGKTSPGNIVVVSNRLPVTISKNAMGKYEYKFSSGGLVTALQGLKKTSTFQWYGWPSLEIPDDEKPVVKKDLLEKFNAIPIFLSDEIADLHYNGFSNSILWPLFHYHPGEINFDENAWLAYNEANATFASEICGNLQDNDLVWVHDYHLMLLPEMLSAHIQRKGLKNIKLGWFLHTPFPSSEIYRILPVRQEILNGVLSCDLIGFHTYDYARHFLSSIQRCLNVNTLPNGVEYQGRFVNVGAFPIGIDVDTFKEGLQKENVKQRIRTLQERFKGCKIMVGVDRLDYIKGVPQKLHAMEVFLNEHPEWIGKVVLVQLAIPSRGDVEEYQYLRSVVNELVGRINGQFGTIEFVPIHFMHKSIPFEELISLYAVSDACIVSSTRDGMNLVSYEYIACRKKGSLILSEFTGAAQSLNGALIVNPWNTDELSDSINEALTLPDEKKDSNWEKLYKYISKYTSAYWGENFVHELNATGTIKTGQ</sequence>
<name>TPS1_ZYGRO</name>